<sequence>MTKNNNDLSNSSSNPPSNRPVAGKEAELEIQRETHAAQSGQSESWLSRPIPTVKRNSLPQLTAVETEPSTECPQCHSMITNTALIFNAYVCPHCDHHLAMTARERLTGFLDHIEAELGQEFSASDPLKFVDSKPYPQRMEQMQTKTGETEALIVLQGKLRDMDVVACAFDFRFMGGSMGSVVGDRFVQAAEVALTNKAPLICFAASGGARMQEGVLSLMQMARTSAAIERLRLAGIPYIVVLTNPVYGGVTASLAMLGDIHIAEPKAMIGFAGKRVIEQTVRETLEEPFQRAEYLLEHGVIDQVVHRHQMNDTVYRLLAKLTHV</sequence>
<protein>
    <recommendedName>
        <fullName evidence="1">Acetyl-coenzyme A carboxylase carboxyl transferase subunit beta</fullName>
        <shortName evidence="1">ACCase subunit beta</shortName>
        <shortName evidence="1">Acetyl-CoA carboxylase carboxyltransferase subunit beta</shortName>
        <ecNumber evidence="1">2.1.3.15</ecNumber>
    </recommendedName>
</protein>
<keyword id="KW-0067">ATP-binding</keyword>
<keyword id="KW-0963">Cytoplasm</keyword>
<keyword id="KW-0275">Fatty acid biosynthesis</keyword>
<keyword id="KW-0276">Fatty acid metabolism</keyword>
<keyword id="KW-0444">Lipid biosynthesis</keyword>
<keyword id="KW-0443">Lipid metabolism</keyword>
<keyword id="KW-0479">Metal-binding</keyword>
<keyword id="KW-0547">Nucleotide-binding</keyword>
<keyword id="KW-0808">Transferase</keyword>
<keyword id="KW-0862">Zinc</keyword>
<keyword id="KW-0863">Zinc-finger</keyword>
<gene>
    <name evidence="1" type="primary">accD</name>
    <name type="ordered locus">PsycPRwf_0757</name>
</gene>
<accession>A5WDG8</accession>
<comment type="function">
    <text evidence="1">Component of the acetyl coenzyme A carboxylase (ACC) complex. Biotin carboxylase (BC) catalyzes the carboxylation of biotin on its carrier protein (BCCP) and then the CO(2) group is transferred by the transcarboxylase to acetyl-CoA to form malonyl-CoA.</text>
</comment>
<comment type="catalytic activity">
    <reaction evidence="1">
        <text>N(6)-carboxybiotinyl-L-lysyl-[protein] + acetyl-CoA = N(6)-biotinyl-L-lysyl-[protein] + malonyl-CoA</text>
        <dbReference type="Rhea" id="RHEA:54728"/>
        <dbReference type="Rhea" id="RHEA-COMP:10505"/>
        <dbReference type="Rhea" id="RHEA-COMP:10506"/>
        <dbReference type="ChEBI" id="CHEBI:57288"/>
        <dbReference type="ChEBI" id="CHEBI:57384"/>
        <dbReference type="ChEBI" id="CHEBI:83144"/>
        <dbReference type="ChEBI" id="CHEBI:83145"/>
        <dbReference type="EC" id="2.1.3.15"/>
    </reaction>
</comment>
<comment type="cofactor">
    <cofactor evidence="1">
        <name>Zn(2+)</name>
        <dbReference type="ChEBI" id="CHEBI:29105"/>
    </cofactor>
    <text evidence="1">Binds 1 zinc ion per subunit.</text>
</comment>
<comment type="pathway">
    <text evidence="1">Lipid metabolism; malonyl-CoA biosynthesis; malonyl-CoA from acetyl-CoA: step 1/1.</text>
</comment>
<comment type="subunit">
    <text evidence="1">Acetyl-CoA carboxylase is a heterohexamer composed of biotin carboxyl carrier protein (AccB), biotin carboxylase (AccC) and two subunits each of ACCase subunit alpha (AccA) and ACCase subunit beta (AccD).</text>
</comment>
<comment type="subcellular location">
    <subcellularLocation>
        <location evidence="1">Cytoplasm</location>
    </subcellularLocation>
</comment>
<comment type="similarity">
    <text evidence="1">Belongs to the AccD/PCCB family.</text>
</comment>
<proteinExistence type="inferred from homology"/>
<evidence type="ECO:0000255" key="1">
    <source>
        <dbReference type="HAMAP-Rule" id="MF_01395"/>
    </source>
</evidence>
<evidence type="ECO:0000255" key="2">
    <source>
        <dbReference type="PROSITE-ProRule" id="PRU01136"/>
    </source>
</evidence>
<evidence type="ECO:0000256" key="3">
    <source>
        <dbReference type="SAM" id="MobiDB-lite"/>
    </source>
</evidence>
<reference key="1">
    <citation type="submission" date="2007-05" db="EMBL/GenBank/DDBJ databases">
        <title>Complete sequence of chromosome of Psychrobacter sp. PRwf-1.</title>
        <authorList>
            <consortium name="US DOE Joint Genome Institute"/>
            <person name="Copeland A."/>
            <person name="Lucas S."/>
            <person name="Lapidus A."/>
            <person name="Barry K."/>
            <person name="Detter J.C."/>
            <person name="Glavina del Rio T."/>
            <person name="Hammon N."/>
            <person name="Israni S."/>
            <person name="Dalin E."/>
            <person name="Tice H."/>
            <person name="Pitluck S."/>
            <person name="Chain P."/>
            <person name="Malfatti S."/>
            <person name="Shin M."/>
            <person name="Vergez L."/>
            <person name="Schmutz J."/>
            <person name="Larimer F."/>
            <person name="Land M."/>
            <person name="Hauser L."/>
            <person name="Kyrpides N."/>
            <person name="Kim E."/>
            <person name="Tiedje J."/>
            <person name="Richardson P."/>
        </authorList>
    </citation>
    <scope>NUCLEOTIDE SEQUENCE [LARGE SCALE GENOMIC DNA]</scope>
    <source>
        <strain>PRwf-1</strain>
    </source>
</reference>
<feature type="chain" id="PRO_0000389823" description="Acetyl-coenzyme A carboxylase carboxyl transferase subunit beta">
    <location>
        <begin position="1"/>
        <end position="324"/>
    </location>
</feature>
<feature type="domain" description="CoA carboxyltransferase N-terminal" evidence="2">
    <location>
        <begin position="68"/>
        <end position="324"/>
    </location>
</feature>
<feature type="zinc finger region" description="C4-type" evidence="1">
    <location>
        <begin position="72"/>
        <end position="94"/>
    </location>
</feature>
<feature type="region of interest" description="Disordered" evidence="3">
    <location>
        <begin position="1"/>
        <end position="51"/>
    </location>
</feature>
<feature type="compositionally biased region" description="Low complexity" evidence="3">
    <location>
        <begin position="1"/>
        <end position="16"/>
    </location>
</feature>
<feature type="compositionally biased region" description="Basic and acidic residues" evidence="3">
    <location>
        <begin position="22"/>
        <end position="35"/>
    </location>
</feature>
<feature type="compositionally biased region" description="Polar residues" evidence="3">
    <location>
        <begin position="36"/>
        <end position="45"/>
    </location>
</feature>
<feature type="binding site" evidence="1">
    <location>
        <position position="72"/>
    </location>
    <ligand>
        <name>Zn(2+)</name>
        <dbReference type="ChEBI" id="CHEBI:29105"/>
    </ligand>
</feature>
<feature type="binding site" evidence="1">
    <location>
        <position position="75"/>
    </location>
    <ligand>
        <name>Zn(2+)</name>
        <dbReference type="ChEBI" id="CHEBI:29105"/>
    </ligand>
</feature>
<feature type="binding site" evidence="1">
    <location>
        <position position="91"/>
    </location>
    <ligand>
        <name>Zn(2+)</name>
        <dbReference type="ChEBI" id="CHEBI:29105"/>
    </ligand>
</feature>
<feature type="binding site" evidence="1">
    <location>
        <position position="94"/>
    </location>
    <ligand>
        <name>Zn(2+)</name>
        <dbReference type="ChEBI" id="CHEBI:29105"/>
    </ligand>
</feature>
<dbReference type="EC" id="2.1.3.15" evidence="1"/>
<dbReference type="EMBL" id="CP000713">
    <property type="protein sequence ID" value="ABQ93709.1"/>
    <property type="molecule type" value="Genomic_DNA"/>
</dbReference>
<dbReference type="SMR" id="A5WDG8"/>
<dbReference type="STRING" id="349106.PsycPRwf_0757"/>
<dbReference type="KEGG" id="prw:PsycPRwf_0757"/>
<dbReference type="eggNOG" id="COG0777">
    <property type="taxonomic scope" value="Bacteria"/>
</dbReference>
<dbReference type="HOGENOM" id="CLU_015486_1_0_6"/>
<dbReference type="UniPathway" id="UPA00655">
    <property type="reaction ID" value="UER00711"/>
</dbReference>
<dbReference type="GO" id="GO:0009329">
    <property type="term" value="C:acetate CoA-transferase complex"/>
    <property type="evidence" value="ECO:0007669"/>
    <property type="project" value="TreeGrafter"/>
</dbReference>
<dbReference type="GO" id="GO:0003989">
    <property type="term" value="F:acetyl-CoA carboxylase activity"/>
    <property type="evidence" value="ECO:0007669"/>
    <property type="project" value="InterPro"/>
</dbReference>
<dbReference type="GO" id="GO:0005524">
    <property type="term" value="F:ATP binding"/>
    <property type="evidence" value="ECO:0007669"/>
    <property type="project" value="UniProtKB-KW"/>
</dbReference>
<dbReference type="GO" id="GO:0016743">
    <property type="term" value="F:carboxyl- or carbamoyltransferase activity"/>
    <property type="evidence" value="ECO:0007669"/>
    <property type="project" value="UniProtKB-UniRule"/>
</dbReference>
<dbReference type="GO" id="GO:0008270">
    <property type="term" value="F:zinc ion binding"/>
    <property type="evidence" value="ECO:0007669"/>
    <property type="project" value="UniProtKB-UniRule"/>
</dbReference>
<dbReference type="GO" id="GO:0006633">
    <property type="term" value="P:fatty acid biosynthetic process"/>
    <property type="evidence" value="ECO:0007669"/>
    <property type="project" value="UniProtKB-KW"/>
</dbReference>
<dbReference type="GO" id="GO:2001295">
    <property type="term" value="P:malonyl-CoA biosynthetic process"/>
    <property type="evidence" value="ECO:0007669"/>
    <property type="project" value="UniProtKB-UniRule"/>
</dbReference>
<dbReference type="Gene3D" id="3.90.226.10">
    <property type="entry name" value="2-enoyl-CoA Hydratase, Chain A, domain 1"/>
    <property type="match status" value="1"/>
</dbReference>
<dbReference type="HAMAP" id="MF_01395">
    <property type="entry name" value="AcetylCoA_CT_beta"/>
    <property type="match status" value="1"/>
</dbReference>
<dbReference type="InterPro" id="IPR034733">
    <property type="entry name" value="AcCoA_carboxyl_beta"/>
</dbReference>
<dbReference type="InterPro" id="IPR000438">
    <property type="entry name" value="Acetyl_CoA_COase_Trfase_b_su"/>
</dbReference>
<dbReference type="InterPro" id="IPR029045">
    <property type="entry name" value="ClpP/crotonase-like_dom_sf"/>
</dbReference>
<dbReference type="InterPro" id="IPR011762">
    <property type="entry name" value="COA_CT_N"/>
</dbReference>
<dbReference type="NCBIfam" id="TIGR00515">
    <property type="entry name" value="accD"/>
    <property type="match status" value="1"/>
</dbReference>
<dbReference type="PANTHER" id="PTHR42995">
    <property type="entry name" value="ACETYL-COENZYME A CARBOXYLASE CARBOXYL TRANSFERASE SUBUNIT BETA, CHLOROPLASTIC"/>
    <property type="match status" value="1"/>
</dbReference>
<dbReference type="PANTHER" id="PTHR42995:SF5">
    <property type="entry name" value="ACETYL-COENZYME A CARBOXYLASE CARBOXYL TRANSFERASE SUBUNIT BETA, CHLOROPLASTIC"/>
    <property type="match status" value="1"/>
</dbReference>
<dbReference type="Pfam" id="PF01039">
    <property type="entry name" value="Carboxyl_trans"/>
    <property type="match status" value="1"/>
</dbReference>
<dbReference type="PRINTS" id="PR01070">
    <property type="entry name" value="ACCCTRFRASEB"/>
</dbReference>
<dbReference type="SUPFAM" id="SSF52096">
    <property type="entry name" value="ClpP/crotonase"/>
    <property type="match status" value="1"/>
</dbReference>
<dbReference type="PROSITE" id="PS50980">
    <property type="entry name" value="COA_CT_NTER"/>
    <property type="match status" value="1"/>
</dbReference>
<organism>
    <name type="scientific">Psychrobacter sp. (strain PRwf-1)</name>
    <dbReference type="NCBI Taxonomy" id="349106"/>
    <lineage>
        <taxon>Bacteria</taxon>
        <taxon>Pseudomonadati</taxon>
        <taxon>Pseudomonadota</taxon>
        <taxon>Gammaproteobacteria</taxon>
        <taxon>Moraxellales</taxon>
        <taxon>Moraxellaceae</taxon>
        <taxon>Psychrobacter</taxon>
    </lineage>
</organism>
<name>ACCD_PSYWF</name>